<reference key="1">
    <citation type="submission" date="2008-08" db="EMBL/GenBank/DDBJ databases">
        <title>The transcript variant 2 encodes a short isoform for Homo sapiens nudix (nucleoside diphosphate linked moiety X)-type motif 7 (NUDT7).</title>
        <authorList>
            <person name="Hong J."/>
        </authorList>
    </citation>
    <scope>NUCLEOTIDE SEQUENCE [MRNA] (ISOFORM 2)</scope>
</reference>
<reference key="2">
    <citation type="journal article" date="2004" name="Nat. Genet.">
        <title>Complete sequencing and characterization of 21,243 full-length human cDNAs.</title>
        <authorList>
            <person name="Ota T."/>
            <person name="Suzuki Y."/>
            <person name="Nishikawa T."/>
            <person name="Otsuki T."/>
            <person name="Sugiyama T."/>
            <person name="Irie R."/>
            <person name="Wakamatsu A."/>
            <person name="Hayashi K."/>
            <person name="Sato H."/>
            <person name="Nagai K."/>
            <person name="Kimura K."/>
            <person name="Makita H."/>
            <person name="Sekine M."/>
            <person name="Obayashi M."/>
            <person name="Nishi T."/>
            <person name="Shibahara T."/>
            <person name="Tanaka T."/>
            <person name="Ishii S."/>
            <person name="Yamamoto J."/>
            <person name="Saito K."/>
            <person name="Kawai Y."/>
            <person name="Isono Y."/>
            <person name="Nakamura Y."/>
            <person name="Nagahari K."/>
            <person name="Murakami K."/>
            <person name="Yasuda T."/>
            <person name="Iwayanagi T."/>
            <person name="Wagatsuma M."/>
            <person name="Shiratori A."/>
            <person name="Sudo H."/>
            <person name="Hosoiri T."/>
            <person name="Kaku Y."/>
            <person name="Kodaira H."/>
            <person name="Kondo H."/>
            <person name="Sugawara M."/>
            <person name="Takahashi M."/>
            <person name="Kanda K."/>
            <person name="Yokoi T."/>
            <person name="Furuya T."/>
            <person name="Kikkawa E."/>
            <person name="Omura Y."/>
            <person name="Abe K."/>
            <person name="Kamihara K."/>
            <person name="Katsuta N."/>
            <person name="Sato K."/>
            <person name="Tanikawa M."/>
            <person name="Yamazaki M."/>
            <person name="Ninomiya K."/>
            <person name="Ishibashi T."/>
            <person name="Yamashita H."/>
            <person name="Murakawa K."/>
            <person name="Fujimori K."/>
            <person name="Tanai H."/>
            <person name="Kimata M."/>
            <person name="Watanabe M."/>
            <person name="Hiraoka S."/>
            <person name="Chiba Y."/>
            <person name="Ishida S."/>
            <person name="Ono Y."/>
            <person name="Takiguchi S."/>
            <person name="Watanabe S."/>
            <person name="Yosida M."/>
            <person name="Hotuta T."/>
            <person name="Kusano J."/>
            <person name="Kanehori K."/>
            <person name="Takahashi-Fujii A."/>
            <person name="Hara H."/>
            <person name="Tanase T.-O."/>
            <person name="Nomura Y."/>
            <person name="Togiya S."/>
            <person name="Komai F."/>
            <person name="Hara R."/>
            <person name="Takeuchi K."/>
            <person name="Arita M."/>
            <person name="Imose N."/>
            <person name="Musashino K."/>
            <person name="Yuuki H."/>
            <person name="Oshima A."/>
            <person name="Sasaki N."/>
            <person name="Aotsuka S."/>
            <person name="Yoshikawa Y."/>
            <person name="Matsunawa H."/>
            <person name="Ichihara T."/>
            <person name="Shiohata N."/>
            <person name="Sano S."/>
            <person name="Moriya S."/>
            <person name="Momiyama H."/>
            <person name="Satoh N."/>
            <person name="Takami S."/>
            <person name="Terashima Y."/>
            <person name="Suzuki O."/>
            <person name="Nakagawa S."/>
            <person name="Senoh A."/>
            <person name="Mizoguchi H."/>
            <person name="Goto Y."/>
            <person name="Shimizu F."/>
            <person name="Wakebe H."/>
            <person name="Hishigaki H."/>
            <person name="Watanabe T."/>
            <person name="Sugiyama A."/>
            <person name="Takemoto M."/>
            <person name="Kawakami B."/>
            <person name="Yamazaki M."/>
            <person name="Watanabe K."/>
            <person name="Kumagai A."/>
            <person name="Itakura S."/>
            <person name="Fukuzumi Y."/>
            <person name="Fujimori Y."/>
            <person name="Komiyama M."/>
            <person name="Tashiro H."/>
            <person name="Tanigami A."/>
            <person name="Fujiwara T."/>
            <person name="Ono T."/>
            <person name="Yamada K."/>
            <person name="Fujii Y."/>
            <person name="Ozaki K."/>
            <person name="Hirao M."/>
            <person name="Ohmori Y."/>
            <person name="Kawabata A."/>
            <person name="Hikiji T."/>
            <person name="Kobatake N."/>
            <person name="Inagaki H."/>
            <person name="Ikema Y."/>
            <person name="Okamoto S."/>
            <person name="Okitani R."/>
            <person name="Kawakami T."/>
            <person name="Noguchi S."/>
            <person name="Itoh T."/>
            <person name="Shigeta K."/>
            <person name="Senba T."/>
            <person name="Matsumura K."/>
            <person name="Nakajima Y."/>
            <person name="Mizuno T."/>
            <person name="Morinaga M."/>
            <person name="Sasaki M."/>
            <person name="Togashi T."/>
            <person name="Oyama M."/>
            <person name="Hata H."/>
            <person name="Watanabe M."/>
            <person name="Komatsu T."/>
            <person name="Mizushima-Sugano J."/>
            <person name="Satoh T."/>
            <person name="Shirai Y."/>
            <person name="Takahashi Y."/>
            <person name="Nakagawa K."/>
            <person name="Okumura K."/>
            <person name="Nagase T."/>
            <person name="Nomura N."/>
            <person name="Kikuchi H."/>
            <person name="Masuho Y."/>
            <person name="Yamashita R."/>
            <person name="Nakai K."/>
            <person name="Yada T."/>
            <person name="Nakamura Y."/>
            <person name="Ohara O."/>
            <person name="Isogai T."/>
            <person name="Sugano S."/>
        </authorList>
    </citation>
    <scope>NUCLEOTIDE SEQUENCE [LARGE SCALE MRNA] (ISOFORM 2)</scope>
    <source>
        <tissue>Tongue</tissue>
    </source>
</reference>
<reference key="3">
    <citation type="journal article" date="2004" name="Nature">
        <title>The sequence and analysis of duplication-rich human chromosome 16.</title>
        <authorList>
            <person name="Martin J."/>
            <person name="Han C."/>
            <person name="Gordon L.A."/>
            <person name="Terry A."/>
            <person name="Prabhakar S."/>
            <person name="She X."/>
            <person name="Xie G."/>
            <person name="Hellsten U."/>
            <person name="Chan Y.M."/>
            <person name="Altherr M."/>
            <person name="Couronne O."/>
            <person name="Aerts A."/>
            <person name="Bajorek E."/>
            <person name="Black S."/>
            <person name="Blumer H."/>
            <person name="Branscomb E."/>
            <person name="Brown N.C."/>
            <person name="Bruno W.J."/>
            <person name="Buckingham J.M."/>
            <person name="Callen D.F."/>
            <person name="Campbell C.S."/>
            <person name="Campbell M.L."/>
            <person name="Campbell E.W."/>
            <person name="Caoile C."/>
            <person name="Challacombe J.F."/>
            <person name="Chasteen L.A."/>
            <person name="Chertkov O."/>
            <person name="Chi H.C."/>
            <person name="Christensen M."/>
            <person name="Clark L.M."/>
            <person name="Cohn J.D."/>
            <person name="Denys M."/>
            <person name="Detter J.C."/>
            <person name="Dickson M."/>
            <person name="Dimitrijevic-Bussod M."/>
            <person name="Escobar J."/>
            <person name="Fawcett J.J."/>
            <person name="Flowers D."/>
            <person name="Fotopulos D."/>
            <person name="Glavina T."/>
            <person name="Gomez M."/>
            <person name="Gonzales E."/>
            <person name="Goodstein D."/>
            <person name="Goodwin L.A."/>
            <person name="Grady D.L."/>
            <person name="Grigoriev I."/>
            <person name="Groza M."/>
            <person name="Hammon N."/>
            <person name="Hawkins T."/>
            <person name="Haydu L."/>
            <person name="Hildebrand C.E."/>
            <person name="Huang W."/>
            <person name="Israni S."/>
            <person name="Jett J."/>
            <person name="Jewett P.B."/>
            <person name="Kadner K."/>
            <person name="Kimball H."/>
            <person name="Kobayashi A."/>
            <person name="Krawczyk M.-C."/>
            <person name="Leyba T."/>
            <person name="Longmire J.L."/>
            <person name="Lopez F."/>
            <person name="Lou Y."/>
            <person name="Lowry S."/>
            <person name="Ludeman T."/>
            <person name="Manohar C.F."/>
            <person name="Mark G.A."/>
            <person name="McMurray K.L."/>
            <person name="Meincke L.J."/>
            <person name="Morgan J."/>
            <person name="Moyzis R.K."/>
            <person name="Mundt M.O."/>
            <person name="Munk A.C."/>
            <person name="Nandkeshwar R.D."/>
            <person name="Pitluck S."/>
            <person name="Pollard M."/>
            <person name="Predki P."/>
            <person name="Parson-Quintana B."/>
            <person name="Ramirez L."/>
            <person name="Rash S."/>
            <person name="Retterer J."/>
            <person name="Ricke D.O."/>
            <person name="Robinson D.L."/>
            <person name="Rodriguez A."/>
            <person name="Salamov A."/>
            <person name="Saunders E.H."/>
            <person name="Scott D."/>
            <person name="Shough T."/>
            <person name="Stallings R.L."/>
            <person name="Stalvey M."/>
            <person name="Sutherland R.D."/>
            <person name="Tapia R."/>
            <person name="Tesmer J.G."/>
            <person name="Thayer N."/>
            <person name="Thompson L.S."/>
            <person name="Tice H."/>
            <person name="Torney D.C."/>
            <person name="Tran-Gyamfi M."/>
            <person name="Tsai M."/>
            <person name="Ulanovsky L.E."/>
            <person name="Ustaszewska A."/>
            <person name="Vo N."/>
            <person name="White P.S."/>
            <person name="Williams A.L."/>
            <person name="Wills P.L."/>
            <person name="Wu J.-R."/>
            <person name="Wu K."/>
            <person name="Yang J."/>
            <person name="DeJong P."/>
            <person name="Bruce D."/>
            <person name="Doggett N.A."/>
            <person name="Deaven L."/>
            <person name="Schmutz J."/>
            <person name="Grimwood J."/>
            <person name="Richardson P."/>
            <person name="Rokhsar D.S."/>
            <person name="Eichler E.E."/>
            <person name="Gilna P."/>
            <person name="Lucas S.M."/>
            <person name="Myers R.M."/>
            <person name="Rubin E.M."/>
            <person name="Pennacchio L.A."/>
        </authorList>
    </citation>
    <scope>NUCLEOTIDE SEQUENCE [LARGE SCALE GENOMIC DNA]</scope>
</reference>
<reference key="4">
    <citation type="submission" date="2005-09" db="EMBL/GenBank/DDBJ databases">
        <authorList>
            <person name="Mural R.J."/>
            <person name="Istrail S."/>
            <person name="Sutton G."/>
            <person name="Florea L."/>
            <person name="Halpern A.L."/>
            <person name="Mobarry C.M."/>
            <person name="Lippert R."/>
            <person name="Walenz B."/>
            <person name="Shatkay H."/>
            <person name="Dew I."/>
            <person name="Miller J.R."/>
            <person name="Flanigan M.J."/>
            <person name="Edwards N.J."/>
            <person name="Bolanos R."/>
            <person name="Fasulo D."/>
            <person name="Halldorsson B.V."/>
            <person name="Hannenhalli S."/>
            <person name="Turner R."/>
            <person name="Yooseph S."/>
            <person name="Lu F."/>
            <person name="Nusskern D.R."/>
            <person name="Shue B.C."/>
            <person name="Zheng X.H."/>
            <person name="Zhong F."/>
            <person name="Delcher A.L."/>
            <person name="Huson D.H."/>
            <person name="Kravitz S.A."/>
            <person name="Mouchard L."/>
            <person name="Reinert K."/>
            <person name="Remington K.A."/>
            <person name="Clark A.G."/>
            <person name="Waterman M.S."/>
            <person name="Eichler E.E."/>
            <person name="Adams M.D."/>
            <person name="Hunkapiller M.W."/>
            <person name="Myers E.W."/>
            <person name="Venter J.C."/>
        </authorList>
    </citation>
    <scope>NUCLEOTIDE SEQUENCE [LARGE SCALE GENOMIC DNA]</scope>
</reference>
<reference key="5">
    <citation type="journal article" date="2001" name="Biochem. J.">
        <title>The mouse Nudt7 gene encodes a peroxisomal nudix hydrolase specific for coenzyme A and its derivatives.</title>
        <authorList>
            <person name="Gasmi L."/>
            <person name="McLennan A.G."/>
        </authorList>
    </citation>
    <scope>TISSUE SPECIFICITY</scope>
</reference>
<reference evidence="11" key="6">
    <citation type="submission" date="2016-08" db="PDB data bank">
        <title>Crystal structure of Human Peroxisomal coenzyme A diphosphatase NUDT7.</title>
        <authorList>
            <person name="Srikannathasan V."/>
        </authorList>
    </citation>
    <scope>X-RAY CRYSTALLOGRAPHY (2.03 ANGSTROMS) OF 1-235</scope>
</reference>
<reference evidence="9 10" key="7">
    <citation type="submission" date="2018-05" db="PDB data bank">
        <title>PanDDA analysis group deposition of models with modelled events (e.g. bound ligands).</title>
        <authorList>
            <person name="Krojer T."/>
            <person name="Talon R."/>
            <person name="Fairhead M."/>
            <person name="Diaz Saez L."/>
            <person name="Bradley A.R."/>
            <person name="Aimon A."/>
            <person name="Collins P."/>
            <person name="Brandao-Neto J."/>
            <person name="Douangamath A."/>
            <person name="Ruda G.F."/>
            <person name="Szommer T."/>
            <person name="Srikannathasan V."/>
            <person name="Elkins J."/>
            <person name="Spencer J."/>
            <person name="London N."/>
            <person name="Nelson A."/>
            <person name="Brennan P.E."/>
            <person name="Huber K."/>
            <person name="Bountra C."/>
            <person name="Arrowsmith C.H."/>
            <person name="Edwards A."/>
            <person name="von Delft F."/>
        </authorList>
    </citation>
    <scope>X-RAY CRYSTALLOGRAPHY (1.52 ANGSTROMS) OF 14-209</scope>
</reference>
<evidence type="ECO:0000250" key="1"/>
<evidence type="ECO:0000250" key="2">
    <source>
        <dbReference type="UniProtKB" id="Q99P30"/>
    </source>
</evidence>
<evidence type="ECO:0000255" key="3">
    <source>
        <dbReference type="PROSITE-ProRule" id="PRU00794"/>
    </source>
</evidence>
<evidence type="ECO:0000269" key="4">
    <source>
    </source>
</evidence>
<evidence type="ECO:0000303" key="5">
    <source>
    </source>
</evidence>
<evidence type="ECO:0000303" key="6">
    <source ref="1"/>
</evidence>
<evidence type="ECO:0000305" key="7"/>
<evidence type="ECO:0000312" key="8">
    <source>
        <dbReference type="HGNC" id="HGNC:8054"/>
    </source>
</evidence>
<evidence type="ECO:0007744" key="9">
    <source>
        <dbReference type="PDB" id="5QGG"/>
    </source>
</evidence>
<evidence type="ECO:0007744" key="10">
    <source>
        <dbReference type="PDB" id="5QHH"/>
    </source>
</evidence>
<evidence type="ECO:0007744" key="11">
    <source>
        <dbReference type="PDB" id="5T3P"/>
    </source>
</evidence>
<evidence type="ECO:0007829" key="12">
    <source>
        <dbReference type="PDB" id="5QHH"/>
    </source>
</evidence>
<evidence type="ECO:0007829" key="13">
    <source>
        <dbReference type="PDB" id="5T3P"/>
    </source>
</evidence>
<name>NUDT7_HUMAN</name>
<protein>
    <recommendedName>
        <fullName evidence="7">Peroxisomal coenzyme A diphosphatase NUDT7</fullName>
        <ecNumber>3.6.1.-</ecNumber>
        <ecNumber evidence="2">3.6.1.77</ecNumber>
    </recommendedName>
    <alternativeName>
        <fullName>Nucleoside diphosphate-linked moiety X motif 7</fullName>
        <shortName>Nudix motif 7</shortName>
    </alternativeName>
</protein>
<accession>P0C024</accession>
<accession>B4DLE5</accession>
<accession>H3BUB8</accession>
<comment type="function">
    <text evidence="2">Fatty acyl-coenzyme A (CoA) diphosphatase that hydrolyzes fatty acyl-CoA to yield acyl-4'-phosphopantetheine and adenosine 3',5'-bisphosphate (By similarity). Cleaves CoA, CoA esters and oxidized CoA with similar efficiencies (By similarity). Preferentially hydrolyzes medium-chain acyl-CoAs and bile acid-CoAs (By similarity). Has no activity toward NDP-sugars, CDP-alcohols, (deoxy)nucleoside 5'-triphosphates, nucleoside 5'-di or monophosphates, diadenosine polyphosphates, NAD, NADH, NADP, NADPH or thymidine-5'-monophospho-p-nitrophenyl ester (By similarity). May be required to eliminate oxidized CoA from peroxisomes, or regulate CoA and acyl-CoA levels in this organelle in response to metabolic demand (By similarity). Does not play a role in U8 snoRNA decapping activity (By similarity). Binds U8 snoRNA (By similarity). Exhibits decapping activity towards dpCoA-capped RNAs in vitro (By similarity).</text>
</comment>
<comment type="catalytic activity">
    <reaction evidence="2">
        <text>hexanoyl-CoA + H2O = hexanoyl-4'-phosphopantetheine + adenosine 3',5'-bisphosphate + 2 H(+)</text>
        <dbReference type="Rhea" id="RHEA:49980"/>
        <dbReference type="ChEBI" id="CHEBI:15377"/>
        <dbReference type="ChEBI" id="CHEBI:15378"/>
        <dbReference type="ChEBI" id="CHEBI:58343"/>
        <dbReference type="ChEBI" id="CHEBI:62620"/>
        <dbReference type="ChEBI" id="CHEBI:132012"/>
    </reaction>
    <physiologicalReaction direction="left-to-right" evidence="2">
        <dbReference type="Rhea" id="RHEA:49981"/>
    </physiologicalReaction>
</comment>
<comment type="catalytic activity">
    <reaction evidence="2">
        <text>octanoyl-CoA + H2O = S-octanoyl-4'-phosphopantetheine + adenosine 3',5'-bisphosphate + 2 H(+)</text>
        <dbReference type="Rhea" id="RHEA:50016"/>
        <dbReference type="ChEBI" id="CHEBI:15377"/>
        <dbReference type="ChEBI" id="CHEBI:15378"/>
        <dbReference type="ChEBI" id="CHEBI:57386"/>
        <dbReference type="ChEBI" id="CHEBI:58343"/>
        <dbReference type="ChEBI" id="CHEBI:132013"/>
    </reaction>
    <physiologicalReaction direction="left-to-right" evidence="2">
        <dbReference type="Rhea" id="RHEA:50017"/>
    </physiologicalReaction>
</comment>
<comment type="catalytic activity">
    <reaction evidence="2">
        <text>butanoyl-CoA + H2O = S-butanoyl-4'-phosphopantetheine + adenosine 3',5'-bisphosphate + 2 H(+)</text>
        <dbReference type="Rhea" id="RHEA:49976"/>
        <dbReference type="ChEBI" id="CHEBI:15377"/>
        <dbReference type="ChEBI" id="CHEBI:15378"/>
        <dbReference type="ChEBI" id="CHEBI:57371"/>
        <dbReference type="ChEBI" id="CHEBI:58343"/>
        <dbReference type="ChEBI" id="CHEBI:132011"/>
    </reaction>
    <physiologicalReaction direction="left-to-right" evidence="2">
        <dbReference type="Rhea" id="RHEA:49977"/>
    </physiologicalReaction>
</comment>
<comment type="catalytic activity">
    <reaction evidence="2">
        <text>decanoyl-CoA + H2O = decanoyl-4'-phosphopantetheine + adenosine 3',5'-bisphosphate + 2 H(+)</text>
        <dbReference type="Rhea" id="RHEA:50020"/>
        <dbReference type="ChEBI" id="CHEBI:15377"/>
        <dbReference type="ChEBI" id="CHEBI:15378"/>
        <dbReference type="ChEBI" id="CHEBI:58343"/>
        <dbReference type="ChEBI" id="CHEBI:61430"/>
        <dbReference type="ChEBI" id="CHEBI:132014"/>
    </reaction>
    <physiologicalReaction direction="left-to-right" evidence="2">
        <dbReference type="Rhea" id="RHEA:50021"/>
    </physiologicalReaction>
</comment>
<comment type="catalytic activity">
    <reaction evidence="2">
        <text>dodecanoyl-CoA + H2O = S-dodecanoyl-4'-phosphopantetheine + adenosine 3',5'-bisphosphate + 2 H(+)</text>
        <dbReference type="Rhea" id="RHEA:50024"/>
        <dbReference type="ChEBI" id="CHEBI:15377"/>
        <dbReference type="ChEBI" id="CHEBI:15378"/>
        <dbReference type="ChEBI" id="CHEBI:57375"/>
        <dbReference type="ChEBI" id="CHEBI:58343"/>
        <dbReference type="ChEBI" id="CHEBI:132015"/>
    </reaction>
    <physiologicalReaction direction="left-to-right" evidence="2">
        <dbReference type="Rhea" id="RHEA:50025"/>
    </physiologicalReaction>
</comment>
<comment type="catalytic activity">
    <reaction evidence="2">
        <text>tetradecanoyl-CoA + H2O = tetradecanoyl-4'-phosphopantetheine + adenosine 3',5'-bisphosphate + 2 H(+)</text>
        <dbReference type="Rhea" id="RHEA:50028"/>
        <dbReference type="ChEBI" id="CHEBI:15377"/>
        <dbReference type="ChEBI" id="CHEBI:15378"/>
        <dbReference type="ChEBI" id="CHEBI:57385"/>
        <dbReference type="ChEBI" id="CHEBI:58343"/>
        <dbReference type="ChEBI" id="CHEBI:132017"/>
    </reaction>
    <physiologicalReaction direction="left-to-right" evidence="2">
        <dbReference type="Rhea" id="RHEA:50029"/>
    </physiologicalReaction>
</comment>
<comment type="catalytic activity">
    <reaction evidence="2">
        <text>choloyl-CoA + H2O = S-choloyl-4'-phosphopantetheine + adenosine 3',5'-bisphosphate + 2 H(+)</text>
        <dbReference type="Rhea" id="RHEA:50036"/>
        <dbReference type="ChEBI" id="CHEBI:15377"/>
        <dbReference type="ChEBI" id="CHEBI:15378"/>
        <dbReference type="ChEBI" id="CHEBI:57373"/>
        <dbReference type="ChEBI" id="CHEBI:58343"/>
        <dbReference type="ChEBI" id="CHEBI:132020"/>
    </reaction>
    <physiologicalReaction direction="left-to-right" evidence="2">
        <dbReference type="Rhea" id="RHEA:50037"/>
    </physiologicalReaction>
</comment>
<comment type="catalytic activity">
    <reaction evidence="2">
        <text>3alpha,7alpha,12alpha-trihydroxy-5beta-cholestan-26-oyl-CoA + H2O = 3alpha,7alpha,12alpha-trihydroxy-5beta-cholestan-26-oyl-4'-phosphopantetheine + adenosine 3',5'-bisphosphate + 2 H(+)</text>
        <dbReference type="Rhea" id="RHEA:50040"/>
        <dbReference type="ChEBI" id="CHEBI:15377"/>
        <dbReference type="ChEBI" id="CHEBI:15378"/>
        <dbReference type="ChEBI" id="CHEBI:58343"/>
        <dbReference type="ChEBI" id="CHEBI:63001"/>
        <dbReference type="ChEBI" id="CHEBI:132021"/>
    </reaction>
    <physiologicalReaction direction="left-to-right" evidence="2">
        <dbReference type="Rhea" id="RHEA:50041"/>
    </physiologicalReaction>
</comment>
<comment type="catalytic activity">
    <reaction evidence="2">
        <text>acetyl-CoA + H2O = S-acetyl-4'-phosphopantetheine + adenosine 3',5'-bisphosphate + 2 H(+)</text>
        <dbReference type="Rhea" id="RHEA:64992"/>
        <dbReference type="ChEBI" id="CHEBI:15377"/>
        <dbReference type="ChEBI" id="CHEBI:15378"/>
        <dbReference type="ChEBI" id="CHEBI:57288"/>
        <dbReference type="ChEBI" id="CHEBI:58343"/>
        <dbReference type="ChEBI" id="CHEBI:156266"/>
    </reaction>
    <physiologicalReaction direction="left-to-right" evidence="2">
        <dbReference type="Rhea" id="RHEA:64993"/>
    </physiologicalReaction>
</comment>
<comment type="catalytic activity">
    <reaction evidence="2">
        <text>CoA + H2O = (R)-4'-phosphopantetheine + adenosine 3',5'-bisphosphate + 2 H(+)</text>
        <dbReference type="Rhea" id="RHEA:64988"/>
        <dbReference type="ChEBI" id="CHEBI:15377"/>
        <dbReference type="ChEBI" id="CHEBI:15378"/>
        <dbReference type="ChEBI" id="CHEBI:57287"/>
        <dbReference type="ChEBI" id="CHEBI:58343"/>
        <dbReference type="ChEBI" id="CHEBI:61723"/>
        <dbReference type="EC" id="3.6.1.77"/>
    </reaction>
    <physiologicalReaction direction="left-to-right" evidence="2">
        <dbReference type="Rhea" id="RHEA:64989"/>
    </physiologicalReaction>
</comment>
<comment type="catalytic activity">
    <reaction evidence="2">
        <text>propanoyl-CoA + H2O = propanoyl-4'-phosphopantetheine + adenosine 3',5'-bisphosphate + 2 H(+)</text>
        <dbReference type="Rhea" id="RHEA:67464"/>
        <dbReference type="ChEBI" id="CHEBI:15377"/>
        <dbReference type="ChEBI" id="CHEBI:15378"/>
        <dbReference type="ChEBI" id="CHEBI:57392"/>
        <dbReference type="ChEBI" id="CHEBI:58343"/>
        <dbReference type="ChEBI" id="CHEBI:172362"/>
    </reaction>
    <physiologicalReaction direction="left-to-right" evidence="2">
        <dbReference type="Rhea" id="RHEA:67465"/>
    </physiologicalReaction>
</comment>
<comment type="catalytic activity">
    <reaction evidence="2">
        <text>malonyl-CoA + H2O = malonyl-4'-phosphopantetheine + adenosine 3',5'-bisphosphate + 2 H(+)</text>
        <dbReference type="Rhea" id="RHEA:67468"/>
        <dbReference type="ChEBI" id="CHEBI:15377"/>
        <dbReference type="ChEBI" id="CHEBI:15378"/>
        <dbReference type="ChEBI" id="CHEBI:57384"/>
        <dbReference type="ChEBI" id="CHEBI:58343"/>
        <dbReference type="ChEBI" id="CHEBI:172363"/>
    </reaction>
    <physiologicalReaction direction="left-to-right" evidence="2">
        <dbReference type="Rhea" id="RHEA:67469"/>
    </physiologicalReaction>
</comment>
<comment type="catalytic activity">
    <reaction evidence="2">
        <text>succinyl-CoA + H2O = succinyl-4'-phosphopantetheine + adenosine 3',5'-bisphosphate + 2 H(+)</text>
        <dbReference type="Rhea" id="RHEA:67472"/>
        <dbReference type="ChEBI" id="CHEBI:15377"/>
        <dbReference type="ChEBI" id="CHEBI:15378"/>
        <dbReference type="ChEBI" id="CHEBI:57292"/>
        <dbReference type="ChEBI" id="CHEBI:58343"/>
        <dbReference type="ChEBI" id="CHEBI:172364"/>
    </reaction>
    <physiologicalReaction direction="left-to-right" evidence="2">
        <dbReference type="Rhea" id="RHEA:67473"/>
    </physiologicalReaction>
</comment>
<comment type="catalytic activity">
    <reaction evidence="2">
        <text>a 5'-end CoA-ribonucleoside in mRNA + H2O = a 5'-end phospho-adenosine-phospho-ribonucleoside in mRNA + (R)-4'-phosphopantetheine + 2 H(+)</text>
        <dbReference type="Rhea" id="RHEA:67592"/>
        <dbReference type="Rhea" id="RHEA-COMP:15719"/>
        <dbReference type="Rhea" id="RHEA-COMP:17276"/>
        <dbReference type="ChEBI" id="CHEBI:15377"/>
        <dbReference type="ChEBI" id="CHEBI:15378"/>
        <dbReference type="ChEBI" id="CHEBI:61723"/>
        <dbReference type="ChEBI" id="CHEBI:144051"/>
        <dbReference type="ChEBI" id="CHEBI:172371"/>
    </reaction>
    <physiologicalReaction direction="left-to-right" evidence="2">
        <dbReference type="Rhea" id="RHEA:67593"/>
    </physiologicalReaction>
</comment>
<comment type="cofactor">
    <cofactor evidence="2">
        <name>Mn(2+)</name>
        <dbReference type="ChEBI" id="CHEBI:29035"/>
    </cofactor>
    <cofactor evidence="2">
        <name>Mg(2+)</name>
        <dbReference type="ChEBI" id="CHEBI:18420"/>
    </cofactor>
</comment>
<comment type="activity regulation">
    <text evidence="2">Inhibited by fluoride.</text>
</comment>
<comment type="subunit">
    <text evidence="2">Monomer.</text>
</comment>
<comment type="subcellular location">
    <subcellularLocation>
        <location evidence="2">Peroxisome</location>
    </subcellularLocation>
</comment>
<comment type="alternative products">
    <event type="alternative splicing"/>
    <isoform>
        <id>P0C024-1</id>
        <name>1</name>
        <sequence type="displayed"/>
    </isoform>
    <isoform>
        <id>P0C024-2</id>
        <name>2</name>
        <sequence type="described" ref="VSP_047605"/>
    </isoform>
    <isoform>
        <id>P0C024-3</id>
        <name>3</name>
        <sequence type="described" ref="VSP_053820 VSP_053821"/>
    </isoform>
</comment>
<comment type="tissue specificity">
    <text evidence="4">Expressed in liver, kidney, pancreas, pituitary, small intestine, spleen, heart and placenta. Weakly expressed in brain.</text>
</comment>
<comment type="similarity">
    <text evidence="7">Belongs to the Nudix hydrolase family. PCD1 subfamily.</text>
</comment>
<sequence length="238" mass="26942">MSRLGLPEEPVRNSLLDDAKARLRKYDIGGKYSHLPYNKYSVLLPLVAKEGKLHLLFTVRSEKLRRAPGEVCFPGGKRDPTDMDDAATALREAQEEVGLRPHQVEVVCCLVPCLIDTDTLITPFVGLIDHNFQAQPNPAEVKDVFLVPLAYFLHPQVHDQHYVTRLGHRFINHIFEYTNPEDGVTYQIKGMTANLAVLVAFIILEKKPTFEVQFNLNDVLASSEELFLKVHKKATSRL</sequence>
<feature type="chain" id="PRO_0000057140" description="Peroxisomal coenzyme A diphosphatase NUDT7">
    <location>
        <begin position="1"/>
        <end position="238"/>
    </location>
</feature>
<feature type="domain" description="Nudix hydrolase" evidence="3">
    <location>
        <begin position="37"/>
        <end position="172"/>
    </location>
</feature>
<feature type="short sequence motif" description="Nudix box">
    <location>
        <begin position="77"/>
        <end position="98"/>
    </location>
</feature>
<feature type="short sequence motif" description="Microbody targeting signal" evidence="1">
    <location>
        <begin position="236"/>
        <end position="238"/>
    </location>
</feature>
<feature type="binding site" evidence="2">
    <location>
        <position position="92"/>
    </location>
    <ligand>
        <name>Mg(2+)</name>
        <dbReference type="ChEBI" id="CHEBI:18420"/>
    </ligand>
</feature>
<feature type="binding site" evidence="2">
    <location>
        <position position="96"/>
    </location>
    <ligand>
        <name>Mg(2+)</name>
        <dbReference type="ChEBI" id="CHEBI:18420"/>
    </ligand>
</feature>
<feature type="site" description="Important for coenzyme A binding" evidence="2">
    <location>
        <position position="66"/>
    </location>
</feature>
<feature type="modified residue" description="N6-succinyllysine" evidence="2">
    <location>
        <position position="20"/>
    </location>
</feature>
<feature type="splice variant" id="VSP_047605" description="In isoform 2." evidence="5 6">
    <location>
        <begin position="64"/>
        <end position="116"/>
    </location>
</feature>
<feature type="splice variant" id="VSP_053820" description="In isoform 3." evidence="7">
    <original>TDTLITPFVGLIDHNFQAQPNPAEVKDVFLVPLAYFLHPQVHDQHYVTRLGHRF</original>
    <variation>RWGSRYVDEAGLELLASSDPPTSASQSAGITDRYIDNSICGFNRPQLPGPAESC</variation>
    <location>
        <begin position="117"/>
        <end position="170"/>
    </location>
</feature>
<feature type="splice variant" id="VSP_053821" description="In isoform 3." evidence="7">
    <location>
        <begin position="171"/>
        <end position="238"/>
    </location>
</feature>
<feature type="sequence variant" id="VAR_050415" description="In dbSNP:rs308925.">
    <original>R</original>
    <variation>H</variation>
    <location>
        <position position="100"/>
    </location>
</feature>
<feature type="sequence variant" id="VAR_050416" description="In dbSNP:rs16946429.">
    <original>E</original>
    <variation>G</variation>
    <location>
        <position position="181"/>
    </location>
</feature>
<feature type="helix" evidence="12">
    <location>
        <begin position="15"/>
        <end position="24"/>
    </location>
</feature>
<feature type="turn" evidence="12">
    <location>
        <begin position="29"/>
        <end position="34"/>
    </location>
</feature>
<feature type="strand" evidence="12">
    <location>
        <begin position="35"/>
        <end position="49"/>
    </location>
</feature>
<feature type="strand" evidence="12">
    <location>
        <begin position="52"/>
        <end position="60"/>
    </location>
</feature>
<feature type="strand" evidence="12">
    <location>
        <begin position="65"/>
        <end position="67"/>
    </location>
</feature>
<feature type="strand" evidence="12">
    <location>
        <begin position="74"/>
        <end position="77"/>
    </location>
</feature>
<feature type="helix" evidence="12">
    <location>
        <begin position="85"/>
        <end position="97"/>
    </location>
</feature>
<feature type="helix" evidence="12">
    <location>
        <begin position="101"/>
        <end position="103"/>
    </location>
</feature>
<feature type="strand" evidence="12">
    <location>
        <begin position="104"/>
        <end position="109"/>
    </location>
</feature>
<feature type="strand" evidence="12">
    <location>
        <begin position="113"/>
        <end position="115"/>
    </location>
</feature>
<feature type="turn" evidence="12">
    <location>
        <begin position="116"/>
        <end position="118"/>
    </location>
</feature>
<feature type="strand" evidence="12">
    <location>
        <begin position="119"/>
        <end position="128"/>
    </location>
</feature>
<feature type="turn" evidence="12">
    <location>
        <begin position="138"/>
        <end position="140"/>
    </location>
</feature>
<feature type="strand" evidence="12">
    <location>
        <begin position="141"/>
        <end position="148"/>
    </location>
</feature>
<feature type="helix" evidence="12">
    <location>
        <begin position="149"/>
        <end position="153"/>
    </location>
</feature>
<feature type="strand" evidence="12">
    <location>
        <begin position="156"/>
        <end position="159"/>
    </location>
</feature>
<feature type="strand" evidence="12">
    <location>
        <begin position="173"/>
        <end position="178"/>
    </location>
</feature>
<feature type="turn" evidence="12">
    <location>
        <begin position="180"/>
        <end position="182"/>
    </location>
</feature>
<feature type="strand" evidence="12">
    <location>
        <begin position="185"/>
        <end position="188"/>
    </location>
</feature>
<feature type="helix" evidence="12">
    <location>
        <begin position="190"/>
        <end position="204"/>
    </location>
</feature>
<feature type="helix" evidence="13">
    <location>
        <begin position="219"/>
        <end position="228"/>
    </location>
</feature>
<dbReference type="EC" id="3.6.1.-"/>
<dbReference type="EC" id="3.6.1.77" evidence="2"/>
<dbReference type="EMBL" id="EU981826">
    <property type="protein sequence ID" value="ACH71652.1"/>
    <property type="molecule type" value="mRNA"/>
</dbReference>
<dbReference type="EMBL" id="AK296963">
    <property type="protein sequence ID" value="BAG59507.1"/>
    <property type="molecule type" value="mRNA"/>
</dbReference>
<dbReference type="EMBL" id="AC092134">
    <property type="status" value="NOT_ANNOTATED_CDS"/>
    <property type="molecule type" value="Genomic_DNA"/>
</dbReference>
<dbReference type="EMBL" id="AC092724">
    <property type="status" value="NOT_ANNOTATED_CDS"/>
    <property type="molecule type" value="Genomic_DNA"/>
</dbReference>
<dbReference type="EMBL" id="CH471114">
    <property type="protein sequence ID" value="EAW95595.1"/>
    <property type="molecule type" value="Genomic_DNA"/>
</dbReference>
<dbReference type="CCDS" id="CCDS42195.1">
    <molecule id="P0C024-1"/>
</dbReference>
<dbReference type="CCDS" id="CCDS58479.1">
    <molecule id="P0C024-3"/>
</dbReference>
<dbReference type="CCDS" id="CCDS58480.1">
    <molecule id="P0C024-2"/>
</dbReference>
<dbReference type="RefSeq" id="NP_001099133.1">
    <molecule id="P0C024-1"/>
    <property type="nucleotide sequence ID" value="NM_001105663.3"/>
</dbReference>
<dbReference type="RefSeq" id="NP_001230586.1">
    <molecule id="P0C024-3"/>
    <property type="nucleotide sequence ID" value="NM_001243657.2"/>
</dbReference>
<dbReference type="RefSeq" id="NP_001230589.1">
    <property type="nucleotide sequence ID" value="NM_001243660.1"/>
</dbReference>
<dbReference type="RefSeq" id="NP_001230590.1">
    <molecule id="P0C024-2"/>
    <property type="nucleotide sequence ID" value="NM_001243661.2"/>
</dbReference>
<dbReference type="PDB" id="5QGG">
    <property type="method" value="X-ray"/>
    <property type="resolution" value="1.91 A"/>
    <property type="chains" value="A=14-209"/>
</dbReference>
<dbReference type="PDB" id="5QGH">
    <property type="method" value="X-ray"/>
    <property type="resolution" value="1.82 A"/>
    <property type="chains" value="A=14-209"/>
</dbReference>
<dbReference type="PDB" id="5QGI">
    <property type="method" value="X-ray"/>
    <property type="resolution" value="1.95 A"/>
    <property type="chains" value="A=14-209"/>
</dbReference>
<dbReference type="PDB" id="5QGJ">
    <property type="method" value="X-ray"/>
    <property type="resolution" value="1.95 A"/>
    <property type="chains" value="A=14-209"/>
</dbReference>
<dbReference type="PDB" id="5QGK">
    <property type="method" value="X-ray"/>
    <property type="resolution" value="1.81 A"/>
    <property type="chains" value="A=14-209"/>
</dbReference>
<dbReference type="PDB" id="5QGL">
    <property type="method" value="X-ray"/>
    <property type="resolution" value="2.27 A"/>
    <property type="chains" value="A=14-209"/>
</dbReference>
<dbReference type="PDB" id="5QGM">
    <property type="method" value="X-ray"/>
    <property type="resolution" value="1.96 A"/>
    <property type="chains" value="A=14-209"/>
</dbReference>
<dbReference type="PDB" id="5QGN">
    <property type="method" value="X-ray"/>
    <property type="resolution" value="1.95 A"/>
    <property type="chains" value="A=14-209"/>
</dbReference>
<dbReference type="PDB" id="5QGO">
    <property type="method" value="X-ray"/>
    <property type="resolution" value="1.82 A"/>
    <property type="chains" value="A=14-209"/>
</dbReference>
<dbReference type="PDB" id="5QGP">
    <property type="method" value="X-ray"/>
    <property type="resolution" value="2.09 A"/>
    <property type="chains" value="A=14-209"/>
</dbReference>
<dbReference type="PDB" id="5QGQ">
    <property type="method" value="X-ray"/>
    <property type="resolution" value="1.95 A"/>
    <property type="chains" value="A=14-209"/>
</dbReference>
<dbReference type="PDB" id="5QGR">
    <property type="method" value="X-ray"/>
    <property type="resolution" value="1.96 A"/>
    <property type="chains" value="A=14-209"/>
</dbReference>
<dbReference type="PDB" id="5QGS">
    <property type="method" value="X-ray"/>
    <property type="resolution" value="1.55 A"/>
    <property type="chains" value="A=14-209"/>
</dbReference>
<dbReference type="PDB" id="5QGT">
    <property type="method" value="X-ray"/>
    <property type="resolution" value="1.97 A"/>
    <property type="chains" value="A=14-209"/>
</dbReference>
<dbReference type="PDB" id="5QGU">
    <property type="method" value="X-ray"/>
    <property type="resolution" value="1.71 A"/>
    <property type="chains" value="A=14-209"/>
</dbReference>
<dbReference type="PDB" id="5QGV">
    <property type="method" value="X-ray"/>
    <property type="resolution" value="1.59 A"/>
    <property type="chains" value="A=14-209"/>
</dbReference>
<dbReference type="PDB" id="5QGW">
    <property type="method" value="X-ray"/>
    <property type="resolution" value="1.94 A"/>
    <property type="chains" value="A=14-209"/>
</dbReference>
<dbReference type="PDB" id="5QGX">
    <property type="method" value="X-ray"/>
    <property type="resolution" value="1.61 A"/>
    <property type="chains" value="A=14-209"/>
</dbReference>
<dbReference type="PDB" id="5QGY">
    <property type="method" value="X-ray"/>
    <property type="resolution" value="1.72 A"/>
    <property type="chains" value="A=14-209"/>
</dbReference>
<dbReference type="PDB" id="5QGZ">
    <property type="method" value="X-ray"/>
    <property type="resolution" value="1.65 A"/>
    <property type="chains" value="A=14-209"/>
</dbReference>
<dbReference type="PDB" id="5QH0">
    <property type="method" value="X-ray"/>
    <property type="resolution" value="1.57 A"/>
    <property type="chains" value="A=14-209"/>
</dbReference>
<dbReference type="PDB" id="5QH1">
    <property type="method" value="X-ray"/>
    <property type="resolution" value="1.65 A"/>
    <property type="chains" value="A=14-209"/>
</dbReference>
<dbReference type="PDB" id="5QH2">
    <property type="method" value="X-ray"/>
    <property type="resolution" value="1.74 A"/>
    <property type="chains" value="A=14-209"/>
</dbReference>
<dbReference type="PDB" id="5QH3">
    <property type="method" value="X-ray"/>
    <property type="resolution" value="1.65 A"/>
    <property type="chains" value="A=14-209"/>
</dbReference>
<dbReference type="PDB" id="5QH4">
    <property type="method" value="X-ray"/>
    <property type="resolution" value="1.67 A"/>
    <property type="chains" value="A=14-209"/>
</dbReference>
<dbReference type="PDB" id="5QH5">
    <property type="method" value="X-ray"/>
    <property type="resolution" value="1.85 A"/>
    <property type="chains" value="A=14-209"/>
</dbReference>
<dbReference type="PDB" id="5QH6">
    <property type="method" value="X-ray"/>
    <property type="resolution" value="2.00 A"/>
    <property type="chains" value="A=14-209"/>
</dbReference>
<dbReference type="PDB" id="5QH7">
    <property type="method" value="X-ray"/>
    <property type="resolution" value="1.74 A"/>
    <property type="chains" value="A=14-209"/>
</dbReference>
<dbReference type="PDB" id="5QH8">
    <property type="method" value="X-ray"/>
    <property type="resolution" value="1.75 A"/>
    <property type="chains" value="A=14-209"/>
</dbReference>
<dbReference type="PDB" id="5QH9">
    <property type="method" value="X-ray"/>
    <property type="resolution" value="1.72 A"/>
    <property type="chains" value="A=14-209"/>
</dbReference>
<dbReference type="PDB" id="5QHA">
    <property type="method" value="X-ray"/>
    <property type="resolution" value="1.57 A"/>
    <property type="chains" value="A=14-209"/>
</dbReference>
<dbReference type="PDB" id="5QHB">
    <property type="method" value="X-ray"/>
    <property type="resolution" value="1.57 A"/>
    <property type="chains" value="A=14-209"/>
</dbReference>
<dbReference type="PDB" id="5QHC">
    <property type="method" value="X-ray"/>
    <property type="resolution" value="2.21 A"/>
    <property type="chains" value="A=14-209"/>
</dbReference>
<dbReference type="PDB" id="5QHE">
    <property type="method" value="X-ray"/>
    <property type="resolution" value="1.74 A"/>
    <property type="chains" value="A=14-209"/>
</dbReference>
<dbReference type="PDB" id="5QHF">
    <property type="method" value="X-ray"/>
    <property type="resolution" value="1.67 A"/>
    <property type="chains" value="A=14-209"/>
</dbReference>
<dbReference type="PDB" id="5QHG">
    <property type="method" value="X-ray"/>
    <property type="resolution" value="1.92 A"/>
    <property type="chains" value="A=14-209"/>
</dbReference>
<dbReference type="PDB" id="5QHH">
    <property type="method" value="X-ray"/>
    <property type="resolution" value="1.52 A"/>
    <property type="chains" value="A=14-209"/>
</dbReference>
<dbReference type="PDB" id="5T3P">
    <property type="method" value="X-ray"/>
    <property type="resolution" value="2.03 A"/>
    <property type="chains" value="A/B/C=1-235"/>
</dbReference>
<dbReference type="PDBsum" id="5QGG"/>
<dbReference type="PDBsum" id="5QGH"/>
<dbReference type="PDBsum" id="5QGI"/>
<dbReference type="PDBsum" id="5QGJ"/>
<dbReference type="PDBsum" id="5QGK"/>
<dbReference type="PDBsum" id="5QGL"/>
<dbReference type="PDBsum" id="5QGM"/>
<dbReference type="PDBsum" id="5QGN"/>
<dbReference type="PDBsum" id="5QGO"/>
<dbReference type="PDBsum" id="5QGP"/>
<dbReference type="PDBsum" id="5QGQ"/>
<dbReference type="PDBsum" id="5QGR"/>
<dbReference type="PDBsum" id="5QGS"/>
<dbReference type="PDBsum" id="5QGT"/>
<dbReference type="PDBsum" id="5QGU"/>
<dbReference type="PDBsum" id="5QGV"/>
<dbReference type="PDBsum" id="5QGW"/>
<dbReference type="PDBsum" id="5QGX"/>
<dbReference type="PDBsum" id="5QGY"/>
<dbReference type="PDBsum" id="5QGZ"/>
<dbReference type="PDBsum" id="5QH0"/>
<dbReference type="PDBsum" id="5QH1"/>
<dbReference type="PDBsum" id="5QH2"/>
<dbReference type="PDBsum" id="5QH3"/>
<dbReference type="PDBsum" id="5QH4"/>
<dbReference type="PDBsum" id="5QH5"/>
<dbReference type="PDBsum" id="5QH6"/>
<dbReference type="PDBsum" id="5QH7"/>
<dbReference type="PDBsum" id="5QH8"/>
<dbReference type="PDBsum" id="5QH9"/>
<dbReference type="PDBsum" id="5QHA"/>
<dbReference type="PDBsum" id="5QHB"/>
<dbReference type="PDBsum" id="5QHC"/>
<dbReference type="PDBsum" id="5QHE"/>
<dbReference type="PDBsum" id="5QHF"/>
<dbReference type="PDBsum" id="5QHG"/>
<dbReference type="PDBsum" id="5QHH"/>
<dbReference type="PDBsum" id="5T3P"/>
<dbReference type="SMR" id="P0C024"/>
<dbReference type="BioGRID" id="129708">
    <property type="interactions" value="2"/>
</dbReference>
<dbReference type="FunCoup" id="P0C024">
    <property type="interactions" value="324"/>
</dbReference>
<dbReference type="IntAct" id="P0C024">
    <property type="interactions" value="1"/>
</dbReference>
<dbReference type="STRING" id="9606.ENSP00000268533"/>
<dbReference type="GuidetoPHARMACOLOGY" id="3085"/>
<dbReference type="iPTMnet" id="P0C024"/>
<dbReference type="PhosphoSitePlus" id="P0C024"/>
<dbReference type="BioMuta" id="NUDT7"/>
<dbReference type="DMDM" id="68565858"/>
<dbReference type="jPOST" id="P0C024"/>
<dbReference type="MassIVE" id="P0C024"/>
<dbReference type="PaxDb" id="9606-ENSP00000268533"/>
<dbReference type="PeptideAtlas" id="P0C024"/>
<dbReference type="ProteomicsDB" id="42887"/>
<dbReference type="ProteomicsDB" id="4528"/>
<dbReference type="ProteomicsDB" id="52288">
    <molecule id="P0C024-1"/>
</dbReference>
<dbReference type="Antibodypedia" id="48153">
    <property type="antibodies" value="25 antibodies from 11 providers"/>
</dbReference>
<dbReference type="DNASU" id="283927"/>
<dbReference type="Ensembl" id="ENST00000268533.9">
    <molecule id="P0C024-1"/>
    <property type="protein sequence ID" value="ENSP00000268533.5"/>
    <property type="gene ID" value="ENSG00000140876.11"/>
</dbReference>
<dbReference type="Ensembl" id="ENST00000437314.3">
    <molecule id="P0C024-2"/>
    <property type="protein sequence ID" value="ENSP00000387707.3"/>
    <property type="gene ID" value="ENSG00000140876.11"/>
</dbReference>
<dbReference type="Ensembl" id="ENST00000564085.5">
    <molecule id="P0C024-3"/>
    <property type="protein sequence ID" value="ENSP00000457566.1"/>
    <property type="gene ID" value="ENSG00000140876.11"/>
</dbReference>
<dbReference type="GeneID" id="283927"/>
<dbReference type="KEGG" id="hsa:283927"/>
<dbReference type="MANE-Select" id="ENST00000268533.9">
    <property type="protein sequence ID" value="ENSP00000268533.5"/>
    <property type="RefSeq nucleotide sequence ID" value="NM_001105663.3"/>
    <property type="RefSeq protein sequence ID" value="NP_001099133.1"/>
</dbReference>
<dbReference type="UCSC" id="uc010chd.4">
    <molecule id="P0C024-1"/>
    <property type="organism name" value="human"/>
</dbReference>
<dbReference type="AGR" id="HGNC:8054"/>
<dbReference type="CTD" id="283927"/>
<dbReference type="DisGeNET" id="283927"/>
<dbReference type="GeneCards" id="NUDT7"/>
<dbReference type="HGNC" id="HGNC:8054">
    <property type="gene designation" value="NUDT7"/>
</dbReference>
<dbReference type="HPA" id="ENSG00000140876">
    <property type="expression patterns" value="Tissue enhanced (liver)"/>
</dbReference>
<dbReference type="MIM" id="609231">
    <property type="type" value="gene"/>
</dbReference>
<dbReference type="neXtProt" id="NX_P0C024"/>
<dbReference type="OpenTargets" id="ENSG00000140876"/>
<dbReference type="PharmGKB" id="PA31840"/>
<dbReference type="VEuPathDB" id="HostDB:ENSG00000140876"/>
<dbReference type="eggNOG" id="KOG3069">
    <property type="taxonomic scope" value="Eukaryota"/>
</dbReference>
<dbReference type="GeneTree" id="ENSGT00940000159631"/>
<dbReference type="HOGENOM" id="CLU_040940_6_0_1"/>
<dbReference type="InParanoid" id="P0C024"/>
<dbReference type="OMA" id="HSFHFVD"/>
<dbReference type="OrthoDB" id="206213at2759"/>
<dbReference type="PAN-GO" id="P0C024">
    <property type="GO annotations" value="2 GO annotations based on evolutionary models"/>
</dbReference>
<dbReference type="PhylomeDB" id="P0C024"/>
<dbReference type="TreeFam" id="TF106350"/>
<dbReference type="PathwayCommons" id="P0C024"/>
<dbReference type="Reactome" id="R-HSA-390918">
    <property type="pathway name" value="Peroxisomal lipid metabolism"/>
</dbReference>
<dbReference type="Reactome" id="R-HSA-9033241">
    <property type="pathway name" value="Peroxisomal protein import"/>
</dbReference>
<dbReference type="SignaLink" id="P0C024"/>
<dbReference type="BioGRID-ORCS" id="283927">
    <property type="hits" value="16 hits in 1156 CRISPR screens"/>
</dbReference>
<dbReference type="ChiTaRS" id="NUDT7">
    <property type="organism name" value="human"/>
</dbReference>
<dbReference type="GenomeRNAi" id="283927"/>
<dbReference type="Pharos" id="P0C024">
    <property type="development level" value="Tdark"/>
</dbReference>
<dbReference type="PRO" id="PR:P0C024"/>
<dbReference type="Proteomes" id="UP000005640">
    <property type="component" value="Chromosome 16"/>
</dbReference>
<dbReference type="RNAct" id="P0C024">
    <property type="molecule type" value="protein"/>
</dbReference>
<dbReference type="Bgee" id="ENSG00000140876">
    <property type="expression patterns" value="Expressed in left ventricle myocardium and 168 other cell types or tissues"/>
</dbReference>
<dbReference type="ExpressionAtlas" id="P0C024">
    <property type="expression patterns" value="baseline and differential"/>
</dbReference>
<dbReference type="GO" id="GO:0005829">
    <property type="term" value="C:cytosol"/>
    <property type="evidence" value="ECO:0000304"/>
    <property type="project" value="Reactome"/>
</dbReference>
<dbReference type="GO" id="GO:0005782">
    <property type="term" value="C:peroxisomal matrix"/>
    <property type="evidence" value="ECO:0000304"/>
    <property type="project" value="Reactome"/>
</dbReference>
<dbReference type="GO" id="GO:0005777">
    <property type="term" value="C:peroxisome"/>
    <property type="evidence" value="ECO:0000250"/>
    <property type="project" value="UniProtKB"/>
</dbReference>
<dbReference type="GO" id="GO:0010945">
    <property type="term" value="F:coenzyme A diphosphatase activity"/>
    <property type="evidence" value="ECO:0000250"/>
    <property type="project" value="UniProtKB"/>
</dbReference>
<dbReference type="GO" id="GO:0000287">
    <property type="term" value="F:magnesium ion binding"/>
    <property type="evidence" value="ECO:0000250"/>
    <property type="project" value="UniProtKB"/>
</dbReference>
<dbReference type="GO" id="GO:0030145">
    <property type="term" value="F:manganese ion binding"/>
    <property type="evidence" value="ECO:0007669"/>
    <property type="project" value="InterPro"/>
</dbReference>
<dbReference type="GO" id="GO:0030515">
    <property type="term" value="F:snoRNA binding"/>
    <property type="evidence" value="ECO:0000250"/>
    <property type="project" value="UniProtKB"/>
</dbReference>
<dbReference type="GO" id="GO:0046356">
    <property type="term" value="P:acetyl-CoA catabolic process"/>
    <property type="evidence" value="ECO:0000250"/>
    <property type="project" value="UniProtKB"/>
</dbReference>
<dbReference type="GO" id="GO:0050873">
    <property type="term" value="P:brown fat cell differentiation"/>
    <property type="evidence" value="ECO:0007669"/>
    <property type="project" value="Ensembl"/>
</dbReference>
<dbReference type="GO" id="GO:0044580">
    <property type="term" value="P:butyryl-CoA catabolic process"/>
    <property type="evidence" value="ECO:0000250"/>
    <property type="project" value="UniProtKB"/>
</dbReference>
<dbReference type="GO" id="GO:0015938">
    <property type="term" value="P:coenzyme A catabolic process"/>
    <property type="evidence" value="ECO:0000250"/>
    <property type="project" value="UniProtKB"/>
</dbReference>
<dbReference type="GO" id="GO:2001294">
    <property type="term" value="P:malonyl-CoA catabolic process"/>
    <property type="evidence" value="ECO:0000250"/>
    <property type="project" value="UniProtKB"/>
</dbReference>
<dbReference type="GO" id="GO:0036114">
    <property type="term" value="P:medium-chain fatty-acyl-CoA catabolic process"/>
    <property type="evidence" value="ECO:0000250"/>
    <property type="project" value="UniProtKB"/>
</dbReference>
<dbReference type="GO" id="GO:0009132">
    <property type="term" value="P:nucleoside diphosphate metabolic process"/>
    <property type="evidence" value="ECO:0007669"/>
    <property type="project" value="InterPro"/>
</dbReference>
<dbReference type="GO" id="GO:1902859">
    <property type="term" value="P:propionyl-CoA catabolic process"/>
    <property type="evidence" value="ECO:0000250"/>
    <property type="project" value="UniProtKB"/>
</dbReference>
<dbReference type="GO" id="GO:1902858">
    <property type="term" value="P:propionyl-CoA metabolic process"/>
    <property type="evidence" value="ECO:0000250"/>
    <property type="project" value="UniProtKB"/>
</dbReference>
<dbReference type="GO" id="GO:1901289">
    <property type="term" value="P:succinyl-CoA catabolic process"/>
    <property type="evidence" value="ECO:0000250"/>
    <property type="project" value="UniProtKB"/>
</dbReference>
<dbReference type="CDD" id="cd03426">
    <property type="entry name" value="NUDIX_CoAse_Nudt7"/>
    <property type="match status" value="1"/>
</dbReference>
<dbReference type="FunFam" id="3.90.79.10:FF:000049">
    <property type="entry name" value="Peroxisomal coenzyme A diphosphatase NUDT7"/>
    <property type="match status" value="1"/>
</dbReference>
<dbReference type="Gene3D" id="3.90.79.10">
    <property type="entry name" value="Nucleoside Triphosphate Pyrophosphohydrolase"/>
    <property type="match status" value="1"/>
</dbReference>
<dbReference type="InterPro" id="IPR045121">
    <property type="entry name" value="CoAse"/>
</dbReference>
<dbReference type="InterPro" id="IPR015797">
    <property type="entry name" value="NUDIX_hydrolase-like_dom_sf"/>
</dbReference>
<dbReference type="InterPro" id="IPR000086">
    <property type="entry name" value="NUDIX_hydrolase_dom"/>
</dbReference>
<dbReference type="InterPro" id="IPR000059">
    <property type="entry name" value="NUDIX_hydrolase_NudL_CS"/>
</dbReference>
<dbReference type="PANTHER" id="PTHR12992">
    <property type="entry name" value="NUDIX HYDROLASE"/>
    <property type="match status" value="1"/>
</dbReference>
<dbReference type="PANTHER" id="PTHR12992:SF24">
    <property type="entry name" value="PEROXISOMAL COENZYME A DIPHOSPHATASE NUDT7"/>
    <property type="match status" value="1"/>
</dbReference>
<dbReference type="Pfam" id="PF00293">
    <property type="entry name" value="NUDIX"/>
    <property type="match status" value="1"/>
</dbReference>
<dbReference type="SUPFAM" id="SSF55811">
    <property type="entry name" value="Nudix"/>
    <property type="match status" value="1"/>
</dbReference>
<dbReference type="PROSITE" id="PS51462">
    <property type="entry name" value="NUDIX"/>
    <property type="match status" value="1"/>
</dbReference>
<dbReference type="PROSITE" id="PS01293">
    <property type="entry name" value="NUDIX_COA"/>
    <property type="match status" value="1"/>
</dbReference>
<keyword id="KW-0002">3D-structure</keyword>
<keyword id="KW-0025">Alternative splicing</keyword>
<keyword id="KW-0378">Hydrolase</keyword>
<keyword id="KW-0460">Magnesium</keyword>
<keyword id="KW-0464">Manganese</keyword>
<keyword id="KW-0479">Metal-binding</keyword>
<keyword id="KW-0576">Peroxisome</keyword>
<keyword id="KW-1267">Proteomics identification</keyword>
<keyword id="KW-1185">Reference proteome</keyword>
<keyword id="KW-0694">RNA-binding</keyword>
<proteinExistence type="evidence at protein level"/>
<gene>
    <name evidence="8" type="primary">NUDT7</name>
</gene>
<organism>
    <name type="scientific">Homo sapiens</name>
    <name type="common">Human</name>
    <dbReference type="NCBI Taxonomy" id="9606"/>
    <lineage>
        <taxon>Eukaryota</taxon>
        <taxon>Metazoa</taxon>
        <taxon>Chordata</taxon>
        <taxon>Craniata</taxon>
        <taxon>Vertebrata</taxon>
        <taxon>Euteleostomi</taxon>
        <taxon>Mammalia</taxon>
        <taxon>Eutheria</taxon>
        <taxon>Euarchontoglires</taxon>
        <taxon>Primates</taxon>
        <taxon>Haplorrhini</taxon>
        <taxon>Catarrhini</taxon>
        <taxon>Hominidae</taxon>
        <taxon>Homo</taxon>
    </lineage>
</organism>